<sequence>MAKTIAYDEEARRGLERGLNSLADAVKVTLGPKGRNVVLEKKWGAPTITNDGVSIAKEIELEDPYEKIGAELVKEVAKKTDDVAGDGTTTATVLAQALVKEGLRNVAAGANPLGLKRGIEKAVDKVTETLLKDAKEVETKEQIAATAAISAGDQSIGDLIAEAMDKVGNEGVITVEESNTFGLQLELTEGMRFDKGYISGYFVTDAERQEAVLEEPYILLVSSKVSTVKDLLPLLEKVIQAGKSLLIIAEDVEGEALSTLVVNKIRGTFKSVAVKAPGFGDRRKAMLQDMAILTGAQVISEEVGLTLENTDLSLLGKARKVVMTKDETTIVEGAGDTDAIAGRVAQIRTEIENSDSDYDREKLQERLAKLAGGVAVIKAGAATEVELKERKHRIEDAVRNAKAAVEEGIVAGGGVTLLQAAPALDKLKLTGDEATGANIVKVALEAPLKQIAFNSGMEPGVVAEKVRNLSVGHGLNAATGEYEDLLKAGVADPVKVTRSALQNAASIAGLFLTTEAVVADKPEKTAAPASDPTGGMGGMDF</sequence>
<proteinExistence type="inferred from homology"/>
<organism>
    <name type="scientific">Mycobacterium leprae (strain TN)</name>
    <dbReference type="NCBI Taxonomy" id="272631"/>
    <lineage>
        <taxon>Bacteria</taxon>
        <taxon>Bacillati</taxon>
        <taxon>Actinomycetota</taxon>
        <taxon>Actinomycetes</taxon>
        <taxon>Mycobacteriales</taxon>
        <taxon>Mycobacteriaceae</taxon>
        <taxon>Mycobacterium</taxon>
    </lineage>
</organism>
<keyword id="KW-0067">ATP-binding</keyword>
<keyword id="KW-0134">Cell wall</keyword>
<keyword id="KW-0143">Chaperone</keyword>
<keyword id="KW-0413">Isomerase</keyword>
<keyword id="KW-0547">Nucleotide-binding</keyword>
<keyword id="KW-1185">Reference proteome</keyword>
<keyword id="KW-0964">Secreted</keyword>
<accession>P09239</accession>
<reference key="1">
    <citation type="journal article" date="1986" name="Proc. Natl. Acad. Sci. U.S.A.">
        <title>Efficient mapping of protein antigenic determinants.</title>
        <authorList>
            <person name="Mehra V."/>
            <person name="Sweetser D."/>
            <person name="Young R.A."/>
        </authorList>
    </citation>
    <scope>NUCLEOTIDE SEQUENCE [GENOMIC DNA]</scope>
</reference>
<reference key="2">
    <citation type="journal article" date="2001" name="Nature">
        <title>Massive gene decay in the leprosy bacillus.</title>
        <authorList>
            <person name="Cole S.T."/>
            <person name="Eiglmeier K."/>
            <person name="Parkhill J."/>
            <person name="James K.D."/>
            <person name="Thomson N.R."/>
            <person name="Wheeler P.R."/>
            <person name="Honore N."/>
            <person name="Garnier T."/>
            <person name="Churcher C.M."/>
            <person name="Harris D.E."/>
            <person name="Mungall K.L."/>
            <person name="Basham D."/>
            <person name="Brown D."/>
            <person name="Chillingworth T."/>
            <person name="Connor R."/>
            <person name="Davies R.M."/>
            <person name="Devlin K."/>
            <person name="Duthoy S."/>
            <person name="Feltwell T."/>
            <person name="Fraser A."/>
            <person name="Hamlin N."/>
            <person name="Holroyd S."/>
            <person name="Hornsby T."/>
            <person name="Jagels K."/>
            <person name="Lacroix C."/>
            <person name="Maclean J."/>
            <person name="Moule S."/>
            <person name="Murphy L.D."/>
            <person name="Oliver K."/>
            <person name="Quail M.A."/>
            <person name="Rajandream M.A."/>
            <person name="Rutherford K.M."/>
            <person name="Rutter S."/>
            <person name="Seeger K."/>
            <person name="Simon S."/>
            <person name="Simmonds M."/>
            <person name="Skelton J."/>
            <person name="Squares R."/>
            <person name="Squares S."/>
            <person name="Stevens K."/>
            <person name="Taylor K."/>
            <person name="Whitehead S."/>
            <person name="Woodward J.R."/>
            <person name="Barrell B.G."/>
        </authorList>
    </citation>
    <scope>NUCLEOTIDE SEQUENCE [LARGE SCALE GENOMIC DNA]</scope>
    <source>
        <strain>TN</strain>
    </source>
</reference>
<evidence type="ECO:0000250" key="1"/>
<evidence type="ECO:0000250" key="2">
    <source>
        <dbReference type="UniProtKB" id="P9WPE7"/>
    </source>
</evidence>
<evidence type="ECO:0000255" key="3">
    <source>
        <dbReference type="HAMAP-Rule" id="MF_00600"/>
    </source>
</evidence>
<evidence type="ECO:0000305" key="4"/>
<feature type="initiator methionine" description="Removed" evidence="1">
    <location>
        <position position="1"/>
    </location>
</feature>
<feature type="chain" id="PRO_0000063437" description="Chaperonin GroEL 2">
    <location>
        <begin position="2"/>
        <end position="541"/>
    </location>
</feature>
<feature type="binding site" evidence="3">
    <location>
        <begin position="29"/>
        <end position="32"/>
    </location>
    <ligand>
        <name>ATP</name>
        <dbReference type="ChEBI" id="CHEBI:30616"/>
    </ligand>
</feature>
<feature type="binding site" evidence="3">
    <location>
        <begin position="86"/>
        <end position="90"/>
    </location>
    <ligand>
        <name>ATP</name>
        <dbReference type="ChEBI" id="CHEBI:30616"/>
    </ligand>
</feature>
<feature type="binding site" evidence="3">
    <location>
        <position position="413"/>
    </location>
    <ligand>
        <name>ATP</name>
        <dbReference type="ChEBI" id="CHEBI:30616"/>
    </ligand>
</feature>
<feature type="binding site" evidence="3">
    <location>
        <begin position="476"/>
        <end position="478"/>
    </location>
    <ligand>
        <name>ATP</name>
        <dbReference type="ChEBI" id="CHEBI:30616"/>
    </ligand>
</feature>
<feature type="binding site" evidence="3">
    <location>
        <position position="492"/>
    </location>
    <ligand>
        <name>ATP</name>
        <dbReference type="ChEBI" id="CHEBI:30616"/>
    </ligand>
</feature>
<comment type="function">
    <text evidence="3">Together with its co-chaperonin GroES, plays an essential role in assisting protein folding. The GroEL-GroES system forms a nano-cage that allows encapsulation of the non-native substrate proteins and provides a physical environment optimized to promote and accelerate protein folding.</text>
</comment>
<comment type="catalytic activity">
    <reaction evidence="3">
        <text>ATP + H2O + a folded polypeptide = ADP + phosphate + an unfolded polypeptide.</text>
        <dbReference type="EC" id="5.6.1.7"/>
    </reaction>
</comment>
<comment type="subunit">
    <text evidence="3">Forms a cylinder of 14 subunits composed of two heptameric rings stacked back-to-back. Interacts with the co-chaperonin GroES.</text>
</comment>
<comment type="subcellular location">
    <subcellularLocation>
        <location evidence="2">Secreted</location>
        <location evidence="2">Capsule</location>
    </subcellularLocation>
    <subcellularLocation>
        <location evidence="2">Cell surface</location>
    </subcellularLocation>
    <subcellularLocation>
        <location evidence="2">Secreted</location>
        <location evidence="2">Cell wall</location>
    </subcellularLocation>
</comment>
<comment type="miscellaneous">
    <text>Purified 65 kDa antigen can elicit a strong delayed-type hypersensitivity reaction in experimental animals infected with Mycobacterium tuberculosis.</text>
</comment>
<comment type="miscellaneous">
    <text>This protein is one of the major immunoreactive proteins of the Mycobacteria. This antigen contains epitopes that are common to various species of Mycobacteria.</text>
</comment>
<comment type="similarity">
    <text evidence="3">Belongs to the chaperonin (HSP60) family.</text>
</comment>
<comment type="sequence caution" evidence="4">
    <conflict type="erroneous initiation">
        <sequence resource="EMBL-CDS" id="AAA25354"/>
    </conflict>
</comment>
<protein>
    <recommendedName>
        <fullName evidence="3">Chaperonin GroEL 2</fullName>
        <ecNumber evidence="3">5.6.1.7</ecNumber>
    </recommendedName>
    <alternativeName>
        <fullName evidence="3">60 kDa chaperonin 2</fullName>
    </alternativeName>
    <alternativeName>
        <fullName>65 kDa antigen</fullName>
    </alternativeName>
    <alternativeName>
        <fullName evidence="3">Chaperonin-60 2</fullName>
        <shortName evidence="3">Cpn60 2</shortName>
    </alternativeName>
</protein>
<dbReference type="EC" id="5.6.1.7" evidence="3"/>
<dbReference type="EMBL" id="M14341">
    <property type="protein sequence ID" value="AAA25354.1"/>
    <property type="status" value="ALT_INIT"/>
    <property type="molecule type" value="Genomic_DNA"/>
</dbReference>
<dbReference type="EMBL" id="AL035159">
    <property type="protein sequence ID" value="CAA22689.1"/>
    <property type="molecule type" value="Genomic_DNA"/>
</dbReference>
<dbReference type="EMBL" id="AL583918">
    <property type="protein sequence ID" value="CAC29825.1"/>
    <property type="molecule type" value="Genomic_DNA"/>
</dbReference>
<dbReference type="PIR" id="A25902">
    <property type="entry name" value="A25902"/>
</dbReference>
<dbReference type="PIR" id="T44725">
    <property type="entry name" value="T44725"/>
</dbReference>
<dbReference type="RefSeq" id="NP_301345.1">
    <property type="nucleotide sequence ID" value="NC_002677.1"/>
</dbReference>
<dbReference type="SMR" id="P09239"/>
<dbReference type="STRING" id="272631.gene:17574136"/>
<dbReference type="KEGG" id="mle:ML0317"/>
<dbReference type="PATRIC" id="fig|272631.5.peg.511"/>
<dbReference type="Leproma" id="ML0317"/>
<dbReference type="eggNOG" id="COG0459">
    <property type="taxonomic scope" value="Bacteria"/>
</dbReference>
<dbReference type="HOGENOM" id="CLU_016503_3_0_11"/>
<dbReference type="OrthoDB" id="9766614at2"/>
<dbReference type="Proteomes" id="UP000000806">
    <property type="component" value="Chromosome"/>
</dbReference>
<dbReference type="GO" id="GO:0042603">
    <property type="term" value="C:capsule"/>
    <property type="evidence" value="ECO:0007669"/>
    <property type="project" value="UniProtKB-SubCell"/>
</dbReference>
<dbReference type="GO" id="GO:0009986">
    <property type="term" value="C:cell surface"/>
    <property type="evidence" value="ECO:0007669"/>
    <property type="project" value="UniProtKB-SubCell"/>
</dbReference>
<dbReference type="GO" id="GO:0005737">
    <property type="term" value="C:cytoplasm"/>
    <property type="evidence" value="ECO:0007669"/>
    <property type="project" value="UniProtKB-UniRule"/>
</dbReference>
<dbReference type="GO" id="GO:0005576">
    <property type="term" value="C:extracellular region"/>
    <property type="evidence" value="ECO:0007669"/>
    <property type="project" value="UniProtKB-KW"/>
</dbReference>
<dbReference type="GO" id="GO:0005524">
    <property type="term" value="F:ATP binding"/>
    <property type="evidence" value="ECO:0007669"/>
    <property type="project" value="UniProtKB-UniRule"/>
</dbReference>
<dbReference type="GO" id="GO:0140662">
    <property type="term" value="F:ATP-dependent protein folding chaperone"/>
    <property type="evidence" value="ECO:0007669"/>
    <property type="project" value="InterPro"/>
</dbReference>
<dbReference type="GO" id="GO:0016853">
    <property type="term" value="F:isomerase activity"/>
    <property type="evidence" value="ECO:0007669"/>
    <property type="project" value="UniProtKB-KW"/>
</dbReference>
<dbReference type="GO" id="GO:0051082">
    <property type="term" value="F:unfolded protein binding"/>
    <property type="evidence" value="ECO:0007669"/>
    <property type="project" value="UniProtKB-UniRule"/>
</dbReference>
<dbReference type="GO" id="GO:0042026">
    <property type="term" value="P:protein refolding"/>
    <property type="evidence" value="ECO:0007669"/>
    <property type="project" value="UniProtKB-UniRule"/>
</dbReference>
<dbReference type="CDD" id="cd03344">
    <property type="entry name" value="GroEL"/>
    <property type="match status" value="1"/>
</dbReference>
<dbReference type="FunFam" id="3.50.7.10:FF:000001">
    <property type="entry name" value="60 kDa chaperonin"/>
    <property type="match status" value="1"/>
</dbReference>
<dbReference type="Gene3D" id="3.50.7.10">
    <property type="entry name" value="GroEL"/>
    <property type="match status" value="1"/>
</dbReference>
<dbReference type="Gene3D" id="1.10.560.10">
    <property type="entry name" value="GroEL-like equatorial domain"/>
    <property type="match status" value="1"/>
</dbReference>
<dbReference type="Gene3D" id="3.30.260.10">
    <property type="entry name" value="TCP-1-like chaperonin intermediate domain"/>
    <property type="match status" value="1"/>
</dbReference>
<dbReference type="HAMAP" id="MF_00600">
    <property type="entry name" value="CH60"/>
    <property type="match status" value="1"/>
</dbReference>
<dbReference type="InterPro" id="IPR018370">
    <property type="entry name" value="Chaperonin_Cpn60_CS"/>
</dbReference>
<dbReference type="InterPro" id="IPR001844">
    <property type="entry name" value="Cpn60/GroEL"/>
</dbReference>
<dbReference type="InterPro" id="IPR002423">
    <property type="entry name" value="Cpn60/GroEL/TCP-1"/>
</dbReference>
<dbReference type="InterPro" id="IPR027409">
    <property type="entry name" value="GroEL-like_apical_dom_sf"/>
</dbReference>
<dbReference type="InterPro" id="IPR027413">
    <property type="entry name" value="GROEL-like_equatorial_sf"/>
</dbReference>
<dbReference type="InterPro" id="IPR027410">
    <property type="entry name" value="TCP-1-like_intermed_sf"/>
</dbReference>
<dbReference type="NCBIfam" id="TIGR02348">
    <property type="entry name" value="GroEL"/>
    <property type="match status" value="1"/>
</dbReference>
<dbReference type="NCBIfam" id="NF000592">
    <property type="entry name" value="PRK00013.1"/>
    <property type="match status" value="1"/>
</dbReference>
<dbReference type="NCBIfam" id="NF009487">
    <property type="entry name" value="PRK12849.1"/>
    <property type="match status" value="1"/>
</dbReference>
<dbReference type="NCBIfam" id="NF009488">
    <property type="entry name" value="PRK12850.1"/>
    <property type="match status" value="1"/>
</dbReference>
<dbReference type="NCBIfam" id="NF009489">
    <property type="entry name" value="PRK12851.1"/>
    <property type="match status" value="1"/>
</dbReference>
<dbReference type="PANTHER" id="PTHR45633">
    <property type="entry name" value="60 KDA HEAT SHOCK PROTEIN, MITOCHONDRIAL"/>
    <property type="match status" value="1"/>
</dbReference>
<dbReference type="Pfam" id="PF00118">
    <property type="entry name" value="Cpn60_TCP1"/>
    <property type="match status" value="1"/>
</dbReference>
<dbReference type="PRINTS" id="PR00298">
    <property type="entry name" value="CHAPERONIN60"/>
</dbReference>
<dbReference type="SUPFAM" id="SSF52029">
    <property type="entry name" value="GroEL apical domain-like"/>
    <property type="match status" value="1"/>
</dbReference>
<dbReference type="SUPFAM" id="SSF48592">
    <property type="entry name" value="GroEL equatorial domain-like"/>
    <property type="match status" value="1"/>
</dbReference>
<dbReference type="SUPFAM" id="SSF54849">
    <property type="entry name" value="GroEL-intermediate domain like"/>
    <property type="match status" value="1"/>
</dbReference>
<dbReference type="PROSITE" id="PS00296">
    <property type="entry name" value="CHAPERONINS_CPN60"/>
    <property type="match status" value="1"/>
</dbReference>
<gene>
    <name evidence="3" type="primary">groEL2</name>
    <name evidence="3" type="synonym">groL2</name>
    <name type="ordered locus">ML0317</name>
    <name type="ORF">MLCB1450.05c</name>
</gene>
<name>CH602_MYCLE</name>